<sequence>MEFSVKSGSPEKQRSACIVVGVFEPRRLSPIAEQLDKISDGYISALLRRGELEGKPGQTLLLHHVPNVLSERILLIGCGKERELDERQYKQVIQKTINTLNDTGSMEAVCFLTELHVKGRNNYWKVRQAVETAKETLYSFDQLKTNKSEPRRPLRKMVFNVPTRRELTSGERAIQHGLAIAAGIKAAKDLGNMPPNICNAAYLASQARQLADSYSKNVITRVIGEQQMKELGMHSYLAVGQGSQNESLMSVIEYKGNASEDARPIVLVGKGLTFDSGGISIKPSEGMDEMKYDMCGAAAVYGVMRMVAELQLPINVIGVLAGCENMPGGRAYRPGDVLTTMSGQTVEVLNTDAEGRLVLCDVLTYVERFEPEAVIDVATLTGACVIALGHHITGLMANHNPLAHELIAASEQSGDRAWRLPLGDEYQEQLESNFADMANIGGRPGGAITAGCFLSRFTRKYNWAHLDIAGTAWRSGKAKGATGRPVALLAQFLLNRAGFNGEE</sequence>
<name>AMPA_ECO55</name>
<reference key="1">
    <citation type="journal article" date="2009" name="PLoS Genet.">
        <title>Organised genome dynamics in the Escherichia coli species results in highly diverse adaptive paths.</title>
        <authorList>
            <person name="Touchon M."/>
            <person name="Hoede C."/>
            <person name="Tenaillon O."/>
            <person name="Barbe V."/>
            <person name="Baeriswyl S."/>
            <person name="Bidet P."/>
            <person name="Bingen E."/>
            <person name="Bonacorsi S."/>
            <person name="Bouchier C."/>
            <person name="Bouvet O."/>
            <person name="Calteau A."/>
            <person name="Chiapello H."/>
            <person name="Clermont O."/>
            <person name="Cruveiller S."/>
            <person name="Danchin A."/>
            <person name="Diard M."/>
            <person name="Dossat C."/>
            <person name="Karoui M.E."/>
            <person name="Frapy E."/>
            <person name="Garry L."/>
            <person name="Ghigo J.M."/>
            <person name="Gilles A.M."/>
            <person name="Johnson J."/>
            <person name="Le Bouguenec C."/>
            <person name="Lescat M."/>
            <person name="Mangenot S."/>
            <person name="Martinez-Jehanne V."/>
            <person name="Matic I."/>
            <person name="Nassif X."/>
            <person name="Oztas S."/>
            <person name="Petit M.A."/>
            <person name="Pichon C."/>
            <person name="Rouy Z."/>
            <person name="Ruf C.S."/>
            <person name="Schneider D."/>
            <person name="Tourret J."/>
            <person name="Vacherie B."/>
            <person name="Vallenet D."/>
            <person name="Medigue C."/>
            <person name="Rocha E.P.C."/>
            <person name="Denamur E."/>
        </authorList>
    </citation>
    <scope>NUCLEOTIDE SEQUENCE [LARGE SCALE GENOMIC DNA]</scope>
    <source>
        <strain>55989 / EAEC</strain>
    </source>
</reference>
<organism>
    <name type="scientific">Escherichia coli (strain 55989 / EAEC)</name>
    <dbReference type="NCBI Taxonomy" id="585055"/>
    <lineage>
        <taxon>Bacteria</taxon>
        <taxon>Pseudomonadati</taxon>
        <taxon>Pseudomonadota</taxon>
        <taxon>Gammaproteobacteria</taxon>
        <taxon>Enterobacterales</taxon>
        <taxon>Enterobacteriaceae</taxon>
        <taxon>Escherichia</taxon>
    </lineage>
</organism>
<dbReference type="EC" id="3.4.11.1" evidence="1"/>
<dbReference type="EC" id="3.4.11.10" evidence="1"/>
<dbReference type="EMBL" id="CU928145">
    <property type="protein sequence ID" value="CAV01802.1"/>
    <property type="molecule type" value="Genomic_DNA"/>
</dbReference>
<dbReference type="RefSeq" id="WP_000397144.1">
    <property type="nucleotide sequence ID" value="NZ_CP028304.1"/>
</dbReference>
<dbReference type="SMR" id="B7LCX0"/>
<dbReference type="MEROPS" id="M17.003"/>
<dbReference type="GeneID" id="93777558"/>
<dbReference type="KEGG" id="eck:EC55989_4818"/>
<dbReference type="HOGENOM" id="CLU_013734_2_2_6"/>
<dbReference type="Proteomes" id="UP000000746">
    <property type="component" value="Chromosome"/>
</dbReference>
<dbReference type="GO" id="GO:0005737">
    <property type="term" value="C:cytoplasm"/>
    <property type="evidence" value="ECO:0007669"/>
    <property type="project" value="UniProtKB-SubCell"/>
</dbReference>
<dbReference type="GO" id="GO:0030145">
    <property type="term" value="F:manganese ion binding"/>
    <property type="evidence" value="ECO:0007669"/>
    <property type="project" value="UniProtKB-UniRule"/>
</dbReference>
<dbReference type="GO" id="GO:0070006">
    <property type="term" value="F:metalloaminopeptidase activity"/>
    <property type="evidence" value="ECO:0007669"/>
    <property type="project" value="InterPro"/>
</dbReference>
<dbReference type="GO" id="GO:0006508">
    <property type="term" value="P:proteolysis"/>
    <property type="evidence" value="ECO:0007669"/>
    <property type="project" value="UniProtKB-KW"/>
</dbReference>
<dbReference type="CDD" id="cd00433">
    <property type="entry name" value="Peptidase_M17"/>
    <property type="match status" value="1"/>
</dbReference>
<dbReference type="FunFam" id="3.40.220.10:FF:000001">
    <property type="entry name" value="Probable cytosol aminopeptidase"/>
    <property type="match status" value="1"/>
</dbReference>
<dbReference type="FunFam" id="3.40.630.10:FF:000004">
    <property type="entry name" value="Probable cytosol aminopeptidase"/>
    <property type="match status" value="1"/>
</dbReference>
<dbReference type="Gene3D" id="3.40.220.10">
    <property type="entry name" value="Leucine Aminopeptidase, subunit E, domain 1"/>
    <property type="match status" value="1"/>
</dbReference>
<dbReference type="Gene3D" id="3.40.630.10">
    <property type="entry name" value="Zn peptidases"/>
    <property type="match status" value="1"/>
</dbReference>
<dbReference type="HAMAP" id="MF_00181">
    <property type="entry name" value="Cytosol_peptidase_M17"/>
    <property type="match status" value="1"/>
</dbReference>
<dbReference type="InterPro" id="IPR011356">
    <property type="entry name" value="Leucine_aapep/pepB"/>
</dbReference>
<dbReference type="InterPro" id="IPR043472">
    <property type="entry name" value="Macro_dom-like"/>
</dbReference>
<dbReference type="InterPro" id="IPR000819">
    <property type="entry name" value="Peptidase_M17_C"/>
</dbReference>
<dbReference type="InterPro" id="IPR023042">
    <property type="entry name" value="Peptidase_M17_leu_NH2_pept"/>
</dbReference>
<dbReference type="InterPro" id="IPR008283">
    <property type="entry name" value="Peptidase_M17_N"/>
</dbReference>
<dbReference type="NCBIfam" id="NF002072">
    <property type="entry name" value="PRK00913.1-1"/>
    <property type="match status" value="1"/>
</dbReference>
<dbReference type="NCBIfam" id="NF002073">
    <property type="entry name" value="PRK00913.1-2"/>
    <property type="match status" value="1"/>
</dbReference>
<dbReference type="NCBIfam" id="NF002074">
    <property type="entry name" value="PRK00913.1-4"/>
    <property type="match status" value="1"/>
</dbReference>
<dbReference type="PANTHER" id="PTHR11963:SF23">
    <property type="entry name" value="CYTOSOL AMINOPEPTIDASE"/>
    <property type="match status" value="1"/>
</dbReference>
<dbReference type="PANTHER" id="PTHR11963">
    <property type="entry name" value="LEUCINE AMINOPEPTIDASE-RELATED"/>
    <property type="match status" value="1"/>
</dbReference>
<dbReference type="Pfam" id="PF00883">
    <property type="entry name" value="Peptidase_M17"/>
    <property type="match status" value="1"/>
</dbReference>
<dbReference type="Pfam" id="PF02789">
    <property type="entry name" value="Peptidase_M17_N"/>
    <property type="match status" value="1"/>
</dbReference>
<dbReference type="PRINTS" id="PR00481">
    <property type="entry name" value="LAMNOPPTDASE"/>
</dbReference>
<dbReference type="SUPFAM" id="SSF52949">
    <property type="entry name" value="Macro domain-like"/>
    <property type="match status" value="1"/>
</dbReference>
<dbReference type="SUPFAM" id="SSF53187">
    <property type="entry name" value="Zn-dependent exopeptidases"/>
    <property type="match status" value="1"/>
</dbReference>
<dbReference type="PROSITE" id="PS00631">
    <property type="entry name" value="CYTOSOL_AP"/>
    <property type="match status" value="1"/>
</dbReference>
<keyword id="KW-0031">Aminopeptidase</keyword>
<keyword id="KW-0963">Cytoplasm</keyword>
<keyword id="KW-0378">Hydrolase</keyword>
<keyword id="KW-0464">Manganese</keyword>
<keyword id="KW-0479">Metal-binding</keyword>
<keyword id="KW-0645">Protease</keyword>
<keyword id="KW-1185">Reference proteome</keyword>
<evidence type="ECO:0000255" key="1">
    <source>
        <dbReference type="HAMAP-Rule" id="MF_00181"/>
    </source>
</evidence>
<comment type="function">
    <text evidence="1">Presumably involved in the processing and regular turnover of intracellular proteins. Catalyzes the removal of unsubstituted N-terminal amino acids from various peptides.</text>
</comment>
<comment type="catalytic activity">
    <reaction evidence="1">
        <text>Release of an N-terminal amino acid, Xaa-|-Yaa-, in which Xaa is preferably Leu, but may be other amino acids including Pro although not Arg or Lys, and Yaa may be Pro. Amino acid amides and methyl esters are also readily hydrolyzed, but rates on arylamides are exceedingly low.</text>
        <dbReference type="EC" id="3.4.11.1"/>
    </reaction>
</comment>
<comment type="catalytic activity">
    <reaction evidence="1">
        <text>Release of an N-terminal amino acid, preferentially leucine, but not glutamic or aspartic acids.</text>
        <dbReference type="EC" id="3.4.11.10"/>
    </reaction>
</comment>
<comment type="cofactor">
    <cofactor evidence="1">
        <name>Mn(2+)</name>
        <dbReference type="ChEBI" id="CHEBI:29035"/>
    </cofactor>
    <text evidence="1">Binds 2 manganese ions per subunit.</text>
</comment>
<comment type="subcellular location">
    <subcellularLocation>
        <location evidence="1">Cytoplasm</location>
    </subcellularLocation>
</comment>
<comment type="similarity">
    <text evidence="1">Belongs to the peptidase M17 family.</text>
</comment>
<accession>B7LCX0</accession>
<gene>
    <name evidence="1" type="primary">pepA</name>
    <name type="ordered locus">EC55989_4818</name>
</gene>
<protein>
    <recommendedName>
        <fullName evidence="1">Probable cytosol aminopeptidase</fullName>
        <ecNumber evidence="1">3.4.11.1</ecNumber>
    </recommendedName>
    <alternativeName>
        <fullName evidence="1">Leucine aminopeptidase</fullName>
        <shortName evidence="1">LAP</shortName>
        <ecNumber evidence="1">3.4.11.10</ecNumber>
    </alternativeName>
    <alternativeName>
        <fullName evidence="1">Leucyl aminopeptidase</fullName>
    </alternativeName>
</protein>
<proteinExistence type="inferred from homology"/>
<feature type="chain" id="PRO_1000192712" description="Probable cytosol aminopeptidase">
    <location>
        <begin position="1"/>
        <end position="503"/>
    </location>
</feature>
<feature type="active site" evidence="1">
    <location>
        <position position="282"/>
    </location>
</feature>
<feature type="active site" evidence="1">
    <location>
        <position position="356"/>
    </location>
</feature>
<feature type="binding site" evidence="1">
    <location>
        <position position="270"/>
    </location>
    <ligand>
        <name>Mn(2+)</name>
        <dbReference type="ChEBI" id="CHEBI:29035"/>
        <label>2</label>
    </ligand>
</feature>
<feature type="binding site" evidence="1">
    <location>
        <position position="275"/>
    </location>
    <ligand>
        <name>Mn(2+)</name>
        <dbReference type="ChEBI" id="CHEBI:29035"/>
        <label>1</label>
    </ligand>
</feature>
<feature type="binding site" evidence="1">
    <location>
        <position position="275"/>
    </location>
    <ligand>
        <name>Mn(2+)</name>
        <dbReference type="ChEBI" id="CHEBI:29035"/>
        <label>2</label>
    </ligand>
</feature>
<feature type="binding site" evidence="1">
    <location>
        <position position="293"/>
    </location>
    <ligand>
        <name>Mn(2+)</name>
        <dbReference type="ChEBI" id="CHEBI:29035"/>
        <label>2</label>
    </ligand>
</feature>
<feature type="binding site" evidence="1">
    <location>
        <position position="352"/>
    </location>
    <ligand>
        <name>Mn(2+)</name>
        <dbReference type="ChEBI" id="CHEBI:29035"/>
        <label>1</label>
    </ligand>
</feature>
<feature type="binding site" evidence="1">
    <location>
        <position position="354"/>
    </location>
    <ligand>
        <name>Mn(2+)</name>
        <dbReference type="ChEBI" id="CHEBI:29035"/>
        <label>1</label>
    </ligand>
</feature>
<feature type="binding site" evidence="1">
    <location>
        <position position="354"/>
    </location>
    <ligand>
        <name>Mn(2+)</name>
        <dbReference type="ChEBI" id="CHEBI:29035"/>
        <label>2</label>
    </ligand>
</feature>